<organism>
    <name type="scientific">Leuconostoc lactis</name>
    <dbReference type="NCBI Taxonomy" id="1246"/>
    <lineage>
        <taxon>Bacteria</taxon>
        <taxon>Bacillati</taxon>
        <taxon>Bacillota</taxon>
        <taxon>Bacilli</taxon>
        <taxon>Lactobacillales</taxon>
        <taxon>Lactobacillaceae</taxon>
        <taxon>Leuconostoc</taxon>
    </lineage>
</organism>
<dbReference type="EMBL" id="U24086">
    <property type="protein sequence ID" value="AAB08978.1"/>
    <property type="molecule type" value="Genomic_DNA"/>
</dbReference>
<dbReference type="EMBL" id="U05589">
    <property type="protein sequence ID" value="AAA77669.1"/>
    <property type="molecule type" value="mRNA"/>
</dbReference>
<dbReference type="EMBL" id="U27517">
    <property type="protein sequence ID" value="AAA97575.1"/>
    <property type="molecule type" value="mRNA"/>
</dbReference>
<dbReference type="SMR" id="P50889"/>
<dbReference type="STRING" id="1246.BCR17_00730"/>
<dbReference type="eggNOG" id="COG0539">
    <property type="taxonomic scope" value="Bacteria"/>
</dbReference>
<dbReference type="GO" id="GO:1990904">
    <property type="term" value="C:ribonucleoprotein complex"/>
    <property type="evidence" value="ECO:0007669"/>
    <property type="project" value="UniProtKB-KW"/>
</dbReference>
<dbReference type="GO" id="GO:0005840">
    <property type="term" value="C:ribosome"/>
    <property type="evidence" value="ECO:0007669"/>
    <property type="project" value="UniProtKB-KW"/>
</dbReference>
<dbReference type="GO" id="GO:0003729">
    <property type="term" value="F:mRNA binding"/>
    <property type="evidence" value="ECO:0007669"/>
    <property type="project" value="TreeGrafter"/>
</dbReference>
<dbReference type="GO" id="GO:0003735">
    <property type="term" value="F:structural constituent of ribosome"/>
    <property type="evidence" value="ECO:0007669"/>
    <property type="project" value="TreeGrafter"/>
</dbReference>
<dbReference type="GO" id="GO:0006412">
    <property type="term" value="P:translation"/>
    <property type="evidence" value="ECO:0007669"/>
    <property type="project" value="TreeGrafter"/>
</dbReference>
<dbReference type="CDD" id="cd05687">
    <property type="entry name" value="S1_RPS1_repeat_ec1_hs1"/>
    <property type="match status" value="1"/>
</dbReference>
<dbReference type="CDD" id="cd04465">
    <property type="entry name" value="S1_RPS1_repeat_ec2_hs2"/>
    <property type="match status" value="1"/>
</dbReference>
<dbReference type="CDD" id="cd05688">
    <property type="entry name" value="S1_RPS1_repeat_ec3"/>
    <property type="match status" value="1"/>
</dbReference>
<dbReference type="CDD" id="cd05692">
    <property type="entry name" value="S1_RPS1_repeat_hs4"/>
    <property type="match status" value="1"/>
</dbReference>
<dbReference type="FunFam" id="2.40.50.140:FF:000051">
    <property type="entry name" value="RNA-binding transcriptional accessory protein"/>
    <property type="match status" value="2"/>
</dbReference>
<dbReference type="Gene3D" id="2.40.50.140">
    <property type="entry name" value="Nucleic acid-binding proteins"/>
    <property type="match status" value="4"/>
</dbReference>
<dbReference type="InterPro" id="IPR012340">
    <property type="entry name" value="NA-bd_OB-fold"/>
</dbReference>
<dbReference type="InterPro" id="IPR050437">
    <property type="entry name" value="Ribos_protein_bS1-like"/>
</dbReference>
<dbReference type="InterPro" id="IPR035104">
    <property type="entry name" value="Ribosomal_protein_S1-like"/>
</dbReference>
<dbReference type="InterPro" id="IPR003029">
    <property type="entry name" value="S1_domain"/>
</dbReference>
<dbReference type="NCBIfam" id="NF005208">
    <property type="entry name" value="PRK06676.1"/>
    <property type="match status" value="1"/>
</dbReference>
<dbReference type="PANTHER" id="PTHR10724">
    <property type="entry name" value="30S RIBOSOMAL PROTEIN S1"/>
    <property type="match status" value="1"/>
</dbReference>
<dbReference type="Pfam" id="PF00575">
    <property type="entry name" value="S1"/>
    <property type="match status" value="4"/>
</dbReference>
<dbReference type="PRINTS" id="PR00681">
    <property type="entry name" value="RIBOSOMALS1"/>
</dbReference>
<dbReference type="SMART" id="SM00316">
    <property type="entry name" value="S1"/>
    <property type="match status" value="4"/>
</dbReference>
<dbReference type="SUPFAM" id="SSF50249">
    <property type="entry name" value="Nucleic acid-binding proteins"/>
    <property type="match status" value="4"/>
</dbReference>
<dbReference type="PROSITE" id="PS50126">
    <property type="entry name" value="S1"/>
    <property type="match status" value="4"/>
</dbReference>
<comment type="function">
    <text evidence="1">Binds mRNA; thus facilitating recognition of the initiation point. It is needed to translate mRNA with a short Shine-Dalgarno (SD) purine-rich sequence (By similarity).</text>
</comment>
<comment type="similarity">
    <text evidence="4">Belongs to the bacterial ribosomal protein bS1 family.</text>
</comment>
<comment type="caution">
    <text evidence="4">Was originally (PubMed:7721096, PubMed:8568274) thought to originate from human but is most probably the result of a cDNA library contamination by L.lactis.</text>
</comment>
<reference key="1">
    <citation type="journal article" date="1997" name="Gene">
        <title>A Leuconostoc lactis protein with homology to ribosomal protein S1 shares common epitopes and common DNA binding properties with a mammalian DNA binding nuclear factor.</title>
        <authorList>
            <person name="Yamit-Hezi A."/>
            <person name="Levy Z."/>
            <person name="Neuman S."/>
            <person name="Nudel U."/>
        </authorList>
    </citation>
    <scope>NUCLEOTIDE SEQUENCE [GENOMIC DNA]</scope>
</reference>
<reference key="2">
    <citation type="journal article" date="1995" name="Gene">
        <title>Cloning of a cDNA encoding a human DNA-binding protein similar to ribosomal protein S1.</title>
        <authorList>
            <person name="Eklund E.A."/>
            <person name="Lee S.W."/>
            <person name="Skalnik D.G."/>
        </authorList>
    </citation>
    <scope>NUCLEOTIDE SEQUENCE [GENOMIC DNA] OF 24-429</scope>
</reference>
<reference key="3">
    <citation type="journal article" date="1996" name="J. Immunol.">
        <title>Lupus autoantibodies to double-stranded DNA cross-react with ribosomal protein S1.</title>
        <authorList>
            <person name="Tsuzaka K."/>
            <person name="Leu A.K."/>
            <person name="Frank M.B."/>
            <person name="Movafagh B.F."/>
            <person name="Koscec M."/>
            <person name="Winkler T.H."/>
            <person name="Kalden J.R."/>
            <person name="Reichlin M."/>
        </authorList>
    </citation>
    <scope>NUCLEOTIDE SEQUENCE [GENOMIC DNA] OF 78-429</scope>
</reference>
<protein>
    <recommendedName>
        <fullName evidence="4">Small ribosomal subunit protein bS1</fullName>
    </recommendedName>
    <alternativeName>
        <fullName>30S ribosomal protein S1</fullName>
    </alternativeName>
</protein>
<proteinExistence type="evidence at transcript level"/>
<sequence>MAHALKRILYATWYPDILVNYTHSVNCRRTLDVMSETNNEFLAALESAADQIKVGDVVTGELLAIDNDNQAVVGLSTGEEGVVPAREYSDDRNINLADELKIGDTIEAVVISNVTSDKEGVAYLLSKKRLDARKAWENLSFAEGDTVDAKVINAVRGGLIVDVNGVRGFVPASMVAERFVSDLNQFKNKDIKAQVIEIDPANARLILSRKAVAAQELAAQLAEVFSKLSVGEVVEGTVARLTDFGAFVDLGGVDGLVHVSEISHDRVKNPADVLTKGDKVDVKILALDTEKGRISLSIKATQRGPWDEAADQIAAGSVLEGTVKRVKDFGAFVEILPGIEGLVHVSQISNKRIENPSEVLKSGDKVQVKVLDIKPAEERISLSMKALEEKPEREDRRGNDGSASRADIAAYKQQDDSAATLGDIFGDKL</sequence>
<accession>P50889</accession>
<accession>P71450</accession>
<evidence type="ECO:0000250" key="1"/>
<evidence type="ECO:0000255" key="2">
    <source>
        <dbReference type="PROSITE-ProRule" id="PRU00180"/>
    </source>
</evidence>
<evidence type="ECO:0000256" key="3">
    <source>
        <dbReference type="SAM" id="MobiDB-lite"/>
    </source>
</evidence>
<evidence type="ECO:0000305" key="4"/>
<gene>
    <name type="primary">rps1</name>
</gene>
<keyword id="KW-0677">Repeat</keyword>
<keyword id="KW-0687">Ribonucleoprotein</keyword>
<keyword id="KW-0689">Ribosomal protein</keyword>
<keyword id="KW-0694">RNA-binding</keyword>
<name>RS1_LEULA</name>
<feature type="chain" id="PRO_0000196040" description="Small ribosomal subunit protein bS1">
    <location>
        <begin position="1"/>
        <end position="429"/>
    </location>
</feature>
<feature type="domain" description="S1 motif 1" evidence="2">
    <location>
        <begin position="55"/>
        <end position="128"/>
    </location>
</feature>
<feature type="domain" description="S1 motif 2" evidence="2">
    <location>
        <begin position="144"/>
        <end position="211"/>
    </location>
</feature>
<feature type="domain" description="S1 motif 3" evidence="2">
    <location>
        <begin position="231"/>
        <end position="299"/>
    </location>
</feature>
<feature type="domain" description="S1 motif 4" evidence="2">
    <location>
        <begin position="316"/>
        <end position="385"/>
    </location>
</feature>
<feature type="region of interest" description="Disordered" evidence="3">
    <location>
        <begin position="382"/>
        <end position="412"/>
    </location>
</feature>
<feature type="compositionally biased region" description="Basic and acidic residues" evidence="3">
    <location>
        <begin position="382"/>
        <end position="399"/>
    </location>
</feature>
<feature type="sequence conflict" description="In Ref. 2; AAA77669." evidence="4" ref="2">
    <original>S</original>
    <variation>G</variation>
    <location>
        <position position="24"/>
    </location>
</feature>
<feature type="sequence conflict" description="In Ref. 3; AAA97575." evidence="4" ref="3">
    <original>A</original>
    <variation>S</variation>
    <location>
        <position position="122"/>
    </location>
</feature>
<feature type="sequence conflict" description="In Ref. 2 and 3." evidence="4" ref="2 3">
    <original>L</original>
    <variation>R</variation>
    <location>
        <position position="217"/>
    </location>
</feature>